<dbReference type="EMBL" id="AK011272">
    <property type="protein sequence ID" value="BAB27509.2"/>
    <property type="molecule type" value="mRNA"/>
</dbReference>
<dbReference type="EMBL" id="AK017689">
    <property type="protein sequence ID" value="BAB30876.2"/>
    <property type="molecule type" value="mRNA"/>
</dbReference>
<dbReference type="EMBL" id="AK150823">
    <property type="protein sequence ID" value="BAE29885.1"/>
    <property type="molecule type" value="mRNA"/>
</dbReference>
<dbReference type="EMBL" id="AK160722">
    <property type="protein sequence ID" value="BAE35969.1"/>
    <property type="molecule type" value="mRNA"/>
</dbReference>
<dbReference type="EMBL" id="BC026772">
    <property type="protein sequence ID" value="AAH26772.1"/>
    <property type="molecule type" value="mRNA"/>
</dbReference>
<dbReference type="CCDS" id="CCDS27151.1">
    <molecule id="Q8R326-1"/>
</dbReference>
<dbReference type="RefSeq" id="NP_079958.3">
    <molecule id="Q8R326-1"/>
    <property type="nucleotide sequence ID" value="NM_025682.3"/>
</dbReference>
<dbReference type="SMR" id="Q8R326"/>
<dbReference type="BioGRID" id="211618">
    <property type="interactions" value="47"/>
</dbReference>
<dbReference type="CORUM" id="Q8R326"/>
<dbReference type="FunCoup" id="Q8R326">
    <property type="interactions" value="4769"/>
</dbReference>
<dbReference type="IntAct" id="Q8R326">
    <property type="interactions" value="6"/>
</dbReference>
<dbReference type="MINT" id="Q8R326"/>
<dbReference type="STRING" id="10090.ENSMUSP00000022507"/>
<dbReference type="GlyGen" id="Q8R326">
    <property type="glycosylation" value="1 site, 1 O-linked glycan (1 site)"/>
</dbReference>
<dbReference type="iPTMnet" id="Q8R326"/>
<dbReference type="PhosphoSitePlus" id="Q8R326"/>
<dbReference type="SwissPalm" id="Q8R326"/>
<dbReference type="jPOST" id="Q8R326"/>
<dbReference type="PaxDb" id="10090-ENSMUSP00000022507"/>
<dbReference type="PeptideAtlas" id="Q8R326"/>
<dbReference type="ProteomicsDB" id="301999">
    <molecule id="Q8R326-1"/>
</dbReference>
<dbReference type="ProteomicsDB" id="302000">
    <molecule id="Q8R326-2"/>
</dbReference>
<dbReference type="Pumba" id="Q8R326"/>
<dbReference type="Antibodypedia" id="22257">
    <property type="antibodies" value="65 antibodies from 21 providers"/>
</dbReference>
<dbReference type="DNASU" id="66645"/>
<dbReference type="Ensembl" id="ENSMUST00000022507.13">
    <molecule id="Q8R326-1"/>
    <property type="protein sequence ID" value="ENSMUSP00000022507.6"/>
    <property type="gene ID" value="ENSMUSG00000021938.13"/>
</dbReference>
<dbReference type="Ensembl" id="ENSMUST00000163924.2">
    <molecule id="Q8R326-2"/>
    <property type="protein sequence ID" value="ENSMUSP00000133038.2"/>
    <property type="gene ID" value="ENSMUSG00000021938.13"/>
</dbReference>
<dbReference type="GeneID" id="66645"/>
<dbReference type="KEGG" id="mmu:66645"/>
<dbReference type="UCSC" id="uc007ucj.1">
    <molecule id="Q8R326-1"/>
    <property type="organism name" value="mouse"/>
</dbReference>
<dbReference type="UCSC" id="uc007uck.1">
    <molecule id="Q8R326-2"/>
    <property type="organism name" value="mouse"/>
</dbReference>
<dbReference type="AGR" id="MGI:1913895"/>
<dbReference type="CTD" id="55269"/>
<dbReference type="MGI" id="MGI:1913895">
    <property type="gene designation" value="Pspc1"/>
</dbReference>
<dbReference type="VEuPathDB" id="HostDB:ENSMUSG00000021938"/>
<dbReference type="eggNOG" id="KOG0115">
    <property type="taxonomic scope" value="Eukaryota"/>
</dbReference>
<dbReference type="GeneTree" id="ENSGT00940000157358"/>
<dbReference type="HOGENOM" id="CLU_027185_2_1_1"/>
<dbReference type="InParanoid" id="Q8R326"/>
<dbReference type="OMA" id="EQDMRMG"/>
<dbReference type="OrthoDB" id="10067824at2759"/>
<dbReference type="PhylomeDB" id="Q8R326"/>
<dbReference type="TreeFam" id="TF315795"/>
<dbReference type="BioGRID-ORCS" id="66645">
    <property type="hits" value="4 hits in 77 CRISPR screens"/>
</dbReference>
<dbReference type="CD-CODE" id="764D0258">
    <property type="entry name" value="Neuronal RNP granule"/>
</dbReference>
<dbReference type="ChiTaRS" id="Pspc1">
    <property type="organism name" value="mouse"/>
</dbReference>
<dbReference type="PRO" id="PR:Q8R326"/>
<dbReference type="Proteomes" id="UP000000589">
    <property type="component" value="Chromosome 14"/>
</dbReference>
<dbReference type="RNAct" id="Q8R326">
    <property type="molecule type" value="protein"/>
</dbReference>
<dbReference type="Bgee" id="ENSMUSG00000021938">
    <property type="expression patterns" value="Expressed in embryonic post-anal tail and 264 other cell types or tissues"/>
</dbReference>
<dbReference type="ExpressionAtlas" id="Q8R326">
    <property type="expression patterns" value="baseline and differential"/>
</dbReference>
<dbReference type="GO" id="GO:0005737">
    <property type="term" value="C:cytoplasm"/>
    <property type="evidence" value="ECO:0007669"/>
    <property type="project" value="UniProtKB-SubCell"/>
</dbReference>
<dbReference type="GO" id="GO:0001650">
    <property type="term" value="C:fibrillar center"/>
    <property type="evidence" value="ECO:0007669"/>
    <property type="project" value="Ensembl"/>
</dbReference>
<dbReference type="GO" id="GO:0016363">
    <property type="term" value="C:nuclear matrix"/>
    <property type="evidence" value="ECO:0007669"/>
    <property type="project" value="UniProtKB-SubCell"/>
</dbReference>
<dbReference type="GO" id="GO:0016607">
    <property type="term" value="C:nuclear speck"/>
    <property type="evidence" value="ECO:0007669"/>
    <property type="project" value="UniProtKB-SubCell"/>
</dbReference>
<dbReference type="GO" id="GO:0005654">
    <property type="term" value="C:nucleoplasm"/>
    <property type="evidence" value="ECO:0000314"/>
    <property type="project" value="MGI"/>
</dbReference>
<dbReference type="GO" id="GO:0042382">
    <property type="term" value="C:paraspeckles"/>
    <property type="evidence" value="ECO:0000314"/>
    <property type="project" value="MGI"/>
</dbReference>
<dbReference type="GO" id="GO:0003723">
    <property type="term" value="F:RNA binding"/>
    <property type="evidence" value="ECO:0000314"/>
    <property type="project" value="MGI"/>
</dbReference>
<dbReference type="GO" id="GO:0002218">
    <property type="term" value="P:activation of innate immune response"/>
    <property type="evidence" value="ECO:0007669"/>
    <property type="project" value="Ensembl"/>
</dbReference>
<dbReference type="GO" id="GO:0045087">
    <property type="term" value="P:innate immune response"/>
    <property type="evidence" value="ECO:0007669"/>
    <property type="project" value="UniProtKB-KW"/>
</dbReference>
<dbReference type="GO" id="GO:0140694">
    <property type="term" value="P:membraneless organelle assembly"/>
    <property type="evidence" value="ECO:0007669"/>
    <property type="project" value="Ensembl"/>
</dbReference>
<dbReference type="GO" id="GO:0045892">
    <property type="term" value="P:negative regulation of DNA-templated transcription"/>
    <property type="evidence" value="ECO:0000314"/>
    <property type="project" value="UniProtKB"/>
</dbReference>
<dbReference type="GO" id="GO:0042752">
    <property type="term" value="P:regulation of circadian rhythm"/>
    <property type="evidence" value="ECO:0000315"/>
    <property type="project" value="UniProtKB"/>
</dbReference>
<dbReference type="GO" id="GO:0048511">
    <property type="term" value="P:rhythmic process"/>
    <property type="evidence" value="ECO:0007669"/>
    <property type="project" value="UniProtKB-KW"/>
</dbReference>
<dbReference type="CDD" id="cd12949">
    <property type="entry name" value="NOPS_PSPC1"/>
    <property type="match status" value="1"/>
</dbReference>
<dbReference type="CDD" id="cd12586">
    <property type="entry name" value="RRM1_PSP1"/>
    <property type="match status" value="1"/>
</dbReference>
<dbReference type="FunFam" id="3.30.70.330:FF:000043">
    <property type="entry name" value="paraspeckle component 1 isoform X1"/>
    <property type="match status" value="1"/>
</dbReference>
<dbReference type="FunFam" id="3.30.70.330:FF:000126">
    <property type="entry name" value="paraspeckle component 1 isoform X1"/>
    <property type="match status" value="1"/>
</dbReference>
<dbReference type="Gene3D" id="3.30.70.330">
    <property type="match status" value="2"/>
</dbReference>
<dbReference type="Gene3D" id="6.10.250.1170">
    <property type="match status" value="1"/>
</dbReference>
<dbReference type="InterPro" id="IPR012975">
    <property type="entry name" value="NOPS"/>
</dbReference>
<dbReference type="InterPro" id="IPR012677">
    <property type="entry name" value="Nucleotide-bd_a/b_plait_sf"/>
</dbReference>
<dbReference type="InterPro" id="IPR034522">
    <property type="entry name" value="PSP1_RRM1"/>
</dbReference>
<dbReference type="InterPro" id="IPR035979">
    <property type="entry name" value="RBD_domain_sf"/>
</dbReference>
<dbReference type="InterPro" id="IPR000504">
    <property type="entry name" value="RRM_dom"/>
</dbReference>
<dbReference type="PANTHER" id="PTHR23189">
    <property type="entry name" value="RNA RECOGNITION MOTIF-CONTAINING"/>
    <property type="match status" value="1"/>
</dbReference>
<dbReference type="Pfam" id="PF08075">
    <property type="entry name" value="NOPS"/>
    <property type="match status" value="1"/>
</dbReference>
<dbReference type="Pfam" id="PF00076">
    <property type="entry name" value="RRM_1"/>
    <property type="match status" value="2"/>
</dbReference>
<dbReference type="SMART" id="SM00360">
    <property type="entry name" value="RRM"/>
    <property type="match status" value="2"/>
</dbReference>
<dbReference type="SUPFAM" id="SSF54928">
    <property type="entry name" value="RNA-binding domain, RBD"/>
    <property type="match status" value="1"/>
</dbReference>
<dbReference type="PROSITE" id="PS50102">
    <property type="entry name" value="RRM"/>
    <property type="match status" value="2"/>
</dbReference>
<evidence type="ECO:0000250" key="1">
    <source>
        <dbReference type="UniProtKB" id="Q8WXF1"/>
    </source>
</evidence>
<evidence type="ECO:0000255" key="2"/>
<evidence type="ECO:0000255" key="3">
    <source>
        <dbReference type="PROSITE-ProRule" id="PRU00176"/>
    </source>
</evidence>
<evidence type="ECO:0000256" key="4">
    <source>
        <dbReference type="SAM" id="MobiDB-lite"/>
    </source>
</evidence>
<evidence type="ECO:0000269" key="5">
    <source>
    </source>
</evidence>
<evidence type="ECO:0000269" key="6">
    <source>
    </source>
</evidence>
<evidence type="ECO:0000269" key="7">
    <source>
    </source>
</evidence>
<evidence type="ECO:0000269" key="8">
    <source>
    </source>
</evidence>
<evidence type="ECO:0000303" key="9">
    <source>
    </source>
</evidence>
<evidence type="ECO:0000305" key="10"/>
<evidence type="ECO:0007744" key="11">
    <source>
    </source>
</evidence>
<feature type="chain" id="PRO_0000297541" description="Paraspeckle component 1">
    <location>
        <begin position="1"/>
        <end position="523"/>
    </location>
</feature>
<feature type="domain" description="RRM 1" evidence="3">
    <location>
        <begin position="81"/>
        <end position="153"/>
    </location>
</feature>
<feature type="domain" description="RRM 2" evidence="3">
    <location>
        <begin position="155"/>
        <end position="236"/>
    </location>
</feature>
<feature type="region of interest" description="Sufficient for paraspeckles localization" evidence="1">
    <location>
        <begin position="124"/>
        <end position="357"/>
    </location>
</feature>
<feature type="region of interest" description="Sufficient for perinucleolar caps localization and interaction with NONO" evidence="1">
    <location>
        <begin position="230"/>
        <end position="357"/>
    </location>
</feature>
<feature type="region of interest" description="Disordered" evidence="4">
    <location>
        <begin position="460"/>
        <end position="523"/>
    </location>
</feature>
<feature type="coiled-coil region" evidence="2">
    <location>
        <begin position="282"/>
        <end position="376"/>
    </location>
</feature>
<feature type="compositionally biased region" description="Polar residues" evidence="4">
    <location>
        <begin position="472"/>
        <end position="490"/>
    </location>
</feature>
<feature type="compositionally biased region" description="Gly residues" evidence="4">
    <location>
        <begin position="497"/>
        <end position="514"/>
    </location>
</feature>
<feature type="modified residue" description="N-acetylmethionine" evidence="1">
    <location>
        <position position="1"/>
    </location>
</feature>
<feature type="modified residue" description="Phosphoserine" evidence="1">
    <location>
        <position position="409"/>
    </location>
</feature>
<feature type="modified residue" description="Phosphoserine" evidence="1">
    <location>
        <position position="473"/>
    </location>
</feature>
<feature type="modified residue" description="Phosphoserine" evidence="1">
    <location>
        <position position="477"/>
    </location>
</feature>
<feature type="modified residue" description="Omega-N-methylarginine" evidence="11">
    <location>
        <position position="507"/>
    </location>
</feature>
<feature type="modified residue" description="Phosphoserine" evidence="1">
    <location>
        <position position="509"/>
    </location>
</feature>
<feature type="splice variant" id="VSP_027276" description="In isoform 2." evidence="9">
    <original>HNDR</original>
    <variation>VMYH</variation>
    <location>
        <begin position="463"/>
        <end position="466"/>
    </location>
</feature>
<feature type="splice variant" id="VSP_027277" description="In isoform 2." evidence="9">
    <location>
        <begin position="467"/>
        <end position="523"/>
    </location>
</feature>
<feature type="mutagenesis site" description="Abolishes RNA-binding activity but not AR-mediated transcription coactivation; when associated with A-120; A-197 and A-199." evidence="7">
    <original>F</original>
    <variation>A</variation>
    <location>
        <position position="118"/>
    </location>
</feature>
<feature type="mutagenesis site" description="Abolishes RNA-binding activity but not AR-mediated transcription coactivation; when associated with A-118; A-197 and A-199." evidence="7">
    <original>F</original>
    <variation>A</variation>
    <location>
        <position position="120"/>
    </location>
</feature>
<feature type="mutagenesis site" description="Abolishes RNA-binding activity but not AR-mediated transcription coactivation; when associated with A-118; A-120 and A-199." evidence="7">
    <original>K</original>
    <variation>A</variation>
    <location>
        <position position="197"/>
    </location>
</feature>
<feature type="mutagenesis site" description="Abolishes RNA-binding activity but not AR-mediated transcription coactivation; when associated with A-118; A-120 and A-197." evidence="7">
    <original>F</original>
    <variation>A</variation>
    <location>
        <position position="199"/>
    </location>
</feature>
<feature type="sequence conflict" description="In Ref. 1; BAB30876." evidence="10" ref="1">
    <original>L</original>
    <variation>Q</variation>
    <location>
        <position position="349"/>
    </location>
</feature>
<proteinExistence type="evidence at protein level"/>
<gene>
    <name type="primary">Pspc1</name>
    <name type="synonym">Psp1</name>
</gene>
<reference key="1">
    <citation type="journal article" date="2005" name="Science">
        <title>The transcriptional landscape of the mammalian genome.</title>
        <authorList>
            <person name="Carninci P."/>
            <person name="Kasukawa T."/>
            <person name="Katayama S."/>
            <person name="Gough J."/>
            <person name="Frith M.C."/>
            <person name="Maeda N."/>
            <person name="Oyama R."/>
            <person name="Ravasi T."/>
            <person name="Lenhard B."/>
            <person name="Wells C."/>
            <person name="Kodzius R."/>
            <person name="Shimokawa K."/>
            <person name="Bajic V.B."/>
            <person name="Brenner S.E."/>
            <person name="Batalov S."/>
            <person name="Forrest A.R."/>
            <person name="Zavolan M."/>
            <person name="Davis M.J."/>
            <person name="Wilming L.G."/>
            <person name="Aidinis V."/>
            <person name="Allen J.E."/>
            <person name="Ambesi-Impiombato A."/>
            <person name="Apweiler R."/>
            <person name="Aturaliya R.N."/>
            <person name="Bailey T.L."/>
            <person name="Bansal M."/>
            <person name="Baxter L."/>
            <person name="Beisel K.W."/>
            <person name="Bersano T."/>
            <person name="Bono H."/>
            <person name="Chalk A.M."/>
            <person name="Chiu K.P."/>
            <person name="Choudhary V."/>
            <person name="Christoffels A."/>
            <person name="Clutterbuck D.R."/>
            <person name="Crowe M.L."/>
            <person name="Dalla E."/>
            <person name="Dalrymple B.P."/>
            <person name="de Bono B."/>
            <person name="Della Gatta G."/>
            <person name="di Bernardo D."/>
            <person name="Down T."/>
            <person name="Engstrom P."/>
            <person name="Fagiolini M."/>
            <person name="Faulkner G."/>
            <person name="Fletcher C.F."/>
            <person name="Fukushima T."/>
            <person name="Furuno M."/>
            <person name="Futaki S."/>
            <person name="Gariboldi M."/>
            <person name="Georgii-Hemming P."/>
            <person name="Gingeras T.R."/>
            <person name="Gojobori T."/>
            <person name="Green R.E."/>
            <person name="Gustincich S."/>
            <person name="Harbers M."/>
            <person name="Hayashi Y."/>
            <person name="Hensch T.K."/>
            <person name="Hirokawa N."/>
            <person name="Hill D."/>
            <person name="Huminiecki L."/>
            <person name="Iacono M."/>
            <person name="Ikeo K."/>
            <person name="Iwama A."/>
            <person name="Ishikawa T."/>
            <person name="Jakt M."/>
            <person name="Kanapin A."/>
            <person name="Katoh M."/>
            <person name="Kawasawa Y."/>
            <person name="Kelso J."/>
            <person name="Kitamura H."/>
            <person name="Kitano H."/>
            <person name="Kollias G."/>
            <person name="Krishnan S.P."/>
            <person name="Kruger A."/>
            <person name="Kummerfeld S.K."/>
            <person name="Kurochkin I.V."/>
            <person name="Lareau L.F."/>
            <person name="Lazarevic D."/>
            <person name="Lipovich L."/>
            <person name="Liu J."/>
            <person name="Liuni S."/>
            <person name="McWilliam S."/>
            <person name="Madan Babu M."/>
            <person name="Madera M."/>
            <person name="Marchionni L."/>
            <person name="Matsuda H."/>
            <person name="Matsuzawa S."/>
            <person name="Miki H."/>
            <person name="Mignone F."/>
            <person name="Miyake S."/>
            <person name="Morris K."/>
            <person name="Mottagui-Tabar S."/>
            <person name="Mulder N."/>
            <person name="Nakano N."/>
            <person name="Nakauchi H."/>
            <person name="Ng P."/>
            <person name="Nilsson R."/>
            <person name="Nishiguchi S."/>
            <person name="Nishikawa S."/>
            <person name="Nori F."/>
            <person name="Ohara O."/>
            <person name="Okazaki Y."/>
            <person name="Orlando V."/>
            <person name="Pang K.C."/>
            <person name="Pavan W.J."/>
            <person name="Pavesi G."/>
            <person name="Pesole G."/>
            <person name="Petrovsky N."/>
            <person name="Piazza S."/>
            <person name="Reed J."/>
            <person name="Reid J.F."/>
            <person name="Ring B.Z."/>
            <person name="Ringwald M."/>
            <person name="Rost B."/>
            <person name="Ruan Y."/>
            <person name="Salzberg S.L."/>
            <person name="Sandelin A."/>
            <person name="Schneider C."/>
            <person name="Schoenbach C."/>
            <person name="Sekiguchi K."/>
            <person name="Semple C.A."/>
            <person name="Seno S."/>
            <person name="Sessa L."/>
            <person name="Sheng Y."/>
            <person name="Shibata Y."/>
            <person name="Shimada H."/>
            <person name="Shimada K."/>
            <person name="Silva D."/>
            <person name="Sinclair B."/>
            <person name="Sperling S."/>
            <person name="Stupka E."/>
            <person name="Sugiura K."/>
            <person name="Sultana R."/>
            <person name="Takenaka Y."/>
            <person name="Taki K."/>
            <person name="Tammoja K."/>
            <person name="Tan S.L."/>
            <person name="Tang S."/>
            <person name="Taylor M.S."/>
            <person name="Tegner J."/>
            <person name="Teichmann S.A."/>
            <person name="Ueda H.R."/>
            <person name="van Nimwegen E."/>
            <person name="Verardo R."/>
            <person name="Wei C.L."/>
            <person name="Yagi K."/>
            <person name="Yamanishi H."/>
            <person name="Zabarovsky E."/>
            <person name="Zhu S."/>
            <person name="Zimmer A."/>
            <person name="Hide W."/>
            <person name="Bult C."/>
            <person name="Grimmond S.M."/>
            <person name="Teasdale R.D."/>
            <person name="Liu E.T."/>
            <person name="Brusic V."/>
            <person name="Quackenbush J."/>
            <person name="Wahlestedt C."/>
            <person name="Mattick J.S."/>
            <person name="Hume D.A."/>
            <person name="Kai C."/>
            <person name="Sasaki D."/>
            <person name="Tomaru Y."/>
            <person name="Fukuda S."/>
            <person name="Kanamori-Katayama M."/>
            <person name="Suzuki M."/>
            <person name="Aoki J."/>
            <person name="Arakawa T."/>
            <person name="Iida J."/>
            <person name="Imamura K."/>
            <person name="Itoh M."/>
            <person name="Kato T."/>
            <person name="Kawaji H."/>
            <person name="Kawagashira N."/>
            <person name="Kawashima T."/>
            <person name="Kojima M."/>
            <person name="Kondo S."/>
            <person name="Konno H."/>
            <person name="Nakano K."/>
            <person name="Ninomiya N."/>
            <person name="Nishio T."/>
            <person name="Okada M."/>
            <person name="Plessy C."/>
            <person name="Shibata K."/>
            <person name="Shiraki T."/>
            <person name="Suzuki S."/>
            <person name="Tagami M."/>
            <person name="Waki K."/>
            <person name="Watahiki A."/>
            <person name="Okamura-Oho Y."/>
            <person name="Suzuki H."/>
            <person name="Kawai J."/>
            <person name="Hayashizaki Y."/>
        </authorList>
    </citation>
    <scope>NUCLEOTIDE SEQUENCE [LARGE SCALE MRNA] (ISOFORMS 1 AND 2)</scope>
    <source>
        <strain>C57BL/6J</strain>
        <tissue>Bone marrow</tissue>
        <tissue>Embryo</tissue>
        <tissue>Head</tissue>
    </source>
</reference>
<reference key="2">
    <citation type="journal article" date="2004" name="Genome Res.">
        <title>The status, quality, and expansion of the NIH full-length cDNA project: the Mammalian Gene Collection (MGC).</title>
        <authorList>
            <consortium name="The MGC Project Team"/>
        </authorList>
    </citation>
    <scope>NUCLEOTIDE SEQUENCE [LARGE SCALE MRNA] (ISOFORM 1)</scope>
    <source>
        <strain>FVB/N</strain>
        <tissue>Mammary tumor</tissue>
    </source>
</reference>
<reference key="3">
    <citation type="journal article" date="2004" name="Biol. Reprod.">
        <title>Expression and functional significance of mouse paraspeckle protein 1 on spermatogenesis.</title>
        <authorList>
            <person name="Myojin R."/>
            <person name="Kuwahara S."/>
            <person name="Yasaki T."/>
            <person name="Matsunaga T."/>
            <person name="Sakurai T."/>
            <person name="Kimura M."/>
            <person name="Uesugi S."/>
            <person name="Kurihara Y."/>
        </authorList>
    </citation>
    <scope>INTERACTION WITH NONO AND SFPQ</scope>
    <scope>SUBCELLULAR LOCATION</scope>
    <scope>TISSUE SPECIFICITY</scope>
</reference>
<reference key="4">
    <citation type="journal article" date="2005" name="Cell">
        <title>Regulating gene expression through RNA nuclear retention.</title>
        <authorList>
            <person name="Prasanth K.V."/>
            <person name="Prasanth S.G."/>
            <person name="Xuan Z."/>
            <person name="Hearn S."/>
            <person name="Freier S.M."/>
            <person name="Bennett C.F."/>
            <person name="Zhang M.Q."/>
            <person name="Spector D.L."/>
        </authorList>
    </citation>
    <scope>IDENTIFICATION IN A RNP COMPLEX WITH CTN-RNA</scope>
</reference>
<reference key="5">
    <citation type="journal article" date="2006" name="Biol. Reprod.">
        <title>PSPC1, NONO, and SFPQ are expressed in mouse Sertoli cells and may function as coregulators of androgen receptor-mediated transcription.</title>
        <authorList>
            <person name="Kuwahara S."/>
            <person name="Ikei A."/>
            <person name="Taguchi Y."/>
            <person name="Tabuchi Y."/>
            <person name="Fujimoto N."/>
            <person name="Obinata M."/>
            <person name="Uesugi S."/>
            <person name="Kurihara Y."/>
        </authorList>
    </citation>
    <scope>FUNCTION</scope>
    <scope>INTERACTION WITH NONO AND SFPQ</scope>
    <scope>MUTAGENESIS OF PHE-118; PHE-120; LYS-197 AND PHE-199</scope>
    <scope>IDENTIFICATION BY MASS SPECTROMETRY</scope>
    <scope>SUBCELLULAR LOCATION</scope>
    <scope>TISSUE SPECIFICITY</scope>
</reference>
<reference key="6">
    <citation type="journal article" date="2010" name="Cell">
        <title>A tissue-specific atlas of mouse protein phosphorylation and expression.</title>
        <authorList>
            <person name="Huttlin E.L."/>
            <person name="Jedrychowski M.P."/>
            <person name="Elias J.E."/>
            <person name="Goswami T."/>
            <person name="Rad R."/>
            <person name="Beausoleil S.A."/>
            <person name="Villen J."/>
            <person name="Haas W."/>
            <person name="Sowa M.E."/>
            <person name="Gygi S.P."/>
        </authorList>
    </citation>
    <scope>IDENTIFICATION BY MASS SPECTROMETRY [LARGE SCALE ANALYSIS]</scope>
    <source>
        <tissue>Brain</tissue>
        <tissue>Kidney</tissue>
        <tissue>Lung</tissue>
        <tissue>Spleen</tissue>
        <tissue>Testis</tissue>
    </source>
</reference>
<reference key="7">
    <citation type="journal article" date="2012" name="Mol. Cell. Biol.">
        <title>Distinct roles of DBHS family members in the circadian transcriptional feedback loop.</title>
        <authorList>
            <person name="Kowalska E."/>
            <person name="Ripperger J.A."/>
            <person name="Muheim C."/>
            <person name="Maier B."/>
            <person name="Kurihara Y."/>
            <person name="Fox A.H."/>
            <person name="Kramer A."/>
            <person name="Brown S.A."/>
        </authorList>
    </citation>
    <scope>FUNCTION</scope>
</reference>
<reference key="8">
    <citation type="journal article" date="2014" name="Mol. Cell. Proteomics">
        <title>Immunoaffinity enrichment and mass spectrometry analysis of protein methylation.</title>
        <authorList>
            <person name="Guo A."/>
            <person name="Gu H."/>
            <person name="Zhou J."/>
            <person name="Mulhern D."/>
            <person name="Wang Y."/>
            <person name="Lee K.A."/>
            <person name="Yang V."/>
            <person name="Aguiar M."/>
            <person name="Kornhauser J."/>
            <person name="Jia X."/>
            <person name="Ren J."/>
            <person name="Beausoleil S.A."/>
            <person name="Silva J.C."/>
            <person name="Vemulapalli V."/>
            <person name="Bedford M.T."/>
            <person name="Comb M.J."/>
        </authorList>
    </citation>
    <scope>METHYLATION [LARGE SCALE ANALYSIS] AT ARG-507</scope>
    <scope>IDENTIFICATION BY MASS SPECTROMETRY [LARGE SCALE ANALYSIS]</scope>
    <source>
        <tissue>Brain</tissue>
        <tissue>Embryo</tissue>
    </source>
</reference>
<accession>Q8R326</accession>
<accession>Q3TUK2</accession>
<accession>Q9CYH1</accession>
<accession>Q9D0M8</accession>
<organism>
    <name type="scientific">Mus musculus</name>
    <name type="common">Mouse</name>
    <dbReference type="NCBI Taxonomy" id="10090"/>
    <lineage>
        <taxon>Eukaryota</taxon>
        <taxon>Metazoa</taxon>
        <taxon>Chordata</taxon>
        <taxon>Craniata</taxon>
        <taxon>Vertebrata</taxon>
        <taxon>Euteleostomi</taxon>
        <taxon>Mammalia</taxon>
        <taxon>Eutheria</taxon>
        <taxon>Euarchontoglires</taxon>
        <taxon>Glires</taxon>
        <taxon>Rodentia</taxon>
        <taxon>Myomorpha</taxon>
        <taxon>Muroidea</taxon>
        <taxon>Muridae</taxon>
        <taxon>Murinae</taxon>
        <taxon>Mus</taxon>
        <taxon>Mus</taxon>
    </lineage>
</organism>
<protein>
    <recommendedName>
        <fullName>Paraspeckle component 1</fullName>
    </recommendedName>
    <alternativeName>
        <fullName>Paraspeckle protein 1</fullName>
        <shortName>mPSP1</shortName>
    </alternativeName>
</protein>
<name>PSPC1_MOUSE</name>
<comment type="function">
    <text evidence="1 7 8">RNA-binding protein required for the formation of nuclear paraspeckles. Binds to poly(A), poly(G) and poly(U) RNA homopolymers (By similarity). Regulates, cooperatively with NONO and SFPQ, androgen receptor-mediated gene transcription activity in Sertoli cell line (PubMed:16641145). Regulates the circadian clock by repressing the transcriptional activator activity of the CLOCK-BMAL1 heterodimer (PubMed:22966205). Plays a role in the regulation of DNA virus-mediated innate immune response by assembling into the HDP-RNP complex, a complex that serves as a platform for IRF3 phosphorylation and subsequent innate immune response activation through the cGAS-STING pathway (By similarity).</text>
</comment>
<comment type="subunit">
    <text evidence="1 5 6 7">Forms heterodimers with NONO; this involves formation of a coiled coil domain by helices from both proteins (PubMed:15140795, PubMed:16641145). Found in a RNP complex with CAT2 transcribed nuclear RNA (CTN-RNA) (PubMed:16239143). Interaction with NONO is required for its targeting to paraspeckles and perinucleolar caps (By similarity). Interacts with SFPQ (PubMed:15140795, PubMed:16641145). Part of the HDP-RNP complex composed of at least HEXIM1, PRKDC, XRCC5, XRCC6, paraspeckle proteins (SFPQ, NONO, PSPC1, RBM14, and MATR3) and NEAT1 RNA (By similarity). Interacts with ALKBH5 (when acetylated); interaction with acetylated ALKBH5 facilitates recognition of N(6)-methyladenosine (m6A) RNAs (By similarity).</text>
</comment>
<comment type="interaction">
    <interactant intactId="EBI-309927">
        <id>Q8R326</id>
    </interactant>
    <interactant intactId="EBI-13951208">
        <id>O88609</id>
        <label>Lmx1b</label>
    </interactant>
    <organismsDiffer>false</organismsDiffer>
    <experiments>3</experiments>
</comment>
<comment type="interaction">
    <interactant intactId="EBI-309927">
        <id>Q8R326</id>
    </interactant>
    <interactant intactId="EBI-6094576">
        <id>Q8VIJ6</id>
        <label>Sfpq</label>
    </interactant>
    <organismsDiffer>false</organismsDiffer>
    <experiments>2</experiments>
</comment>
<comment type="subcellular location">
    <subcellularLocation>
        <location evidence="1">Nucleus speckle</location>
    </subcellularLocation>
    <subcellularLocation>
        <location evidence="1">Nucleus</location>
        <location evidence="1">Nucleolus</location>
    </subcellularLocation>
    <subcellularLocation>
        <location evidence="5 7">Nucleus matrix</location>
    </subcellularLocation>
    <subcellularLocation>
        <location evidence="5">Cytoplasm</location>
    </subcellularLocation>
    <text evidence="1">In punctate subnuclear structures often located adjacent to splicing speckles, called paraspeckles. Colocalizes with NONO and SFPQ in paraspeckles and perinucleolar caps in an RNA-dependent manner. May cycle between paraspeckles and nucleolus. In telophase, when daughter nuclei form, localizes to perinucleolar caps.</text>
</comment>
<comment type="alternative products">
    <event type="alternative splicing"/>
    <isoform>
        <id>Q8R326-1</id>
        <name>1</name>
        <name>PSP1-alpha</name>
        <sequence type="displayed"/>
    </isoform>
    <isoform>
        <id>Q8R326-2</id>
        <name>2</name>
        <name>PSP1-beta</name>
        <sequence type="described" ref="VSP_027276 VSP_027277"/>
    </isoform>
</comment>
<comment type="tissue specificity">
    <text evidence="5 7">Isoform 1 is strongly expressed in testis (leptoten spermatocytes, round spematids and Sertoli cells) and moderately in cerebrum, cerebellum, lung, spleen and ovary (at protein level). Isoform 2 is strongly expressed in kidney and moderately in salivary gland (at protein level).</text>
</comment>
<comment type="similarity">
    <text evidence="10">Belongs to the PSPC family.</text>
</comment>
<keyword id="KW-0007">Acetylation</keyword>
<keyword id="KW-0010">Activator</keyword>
<keyword id="KW-0025">Alternative splicing</keyword>
<keyword id="KW-0090">Biological rhythms</keyword>
<keyword id="KW-0175">Coiled coil</keyword>
<keyword id="KW-0963">Cytoplasm</keyword>
<keyword id="KW-0391">Immunity</keyword>
<keyword id="KW-0399">Innate immunity</keyword>
<keyword id="KW-0488">Methylation</keyword>
<keyword id="KW-0539">Nucleus</keyword>
<keyword id="KW-0597">Phosphoprotein</keyword>
<keyword id="KW-1185">Reference proteome</keyword>
<keyword id="KW-0677">Repeat</keyword>
<keyword id="KW-0678">Repressor</keyword>
<keyword id="KW-0694">RNA-binding</keyword>
<keyword id="KW-0804">Transcription</keyword>
<keyword id="KW-0805">Transcription regulation</keyword>
<sequence length="523" mass="58758">MMLRGNLKQVRIEKNPARLRALESAAGESEPVAAAAMALTLAGEQAPPPAPSEEHPDEELGFTIDIKSFLKPGEKTYTQRCRLFVGNLPTDITEEDFKRLFERYGEPSEVFINRDRGFGFIRLESRTLAEIAKAELDGTILKSRPLRIRFATHGAALTVKNLSPVVSNELLEQAFSQFGPVEKAVVVVDDRGRATGKGFVEFAAKPPARKALERCGDGAFLLTTTPRPVIVEPMEQFDDEDGLPEKLMQKTQQYHKEREQPPRFAQPGTFEFEYASRWKALDEMEKQQREQVDRNIREAKEKLEAEMEAARHEHQLMLMRQDLMRRQEELRRLEELRNQELQKRKQIQLRHEEEHRRREEEMIRHREQEELRRQQEGGFKPNYMENREQEMRMGDMGPRGAINMGDAFSPAPAGTQGPPPMMGMNMNNRGTIPGPPMGPGPAMGPEGAANMGTPMIPDNGAVHNDRFPQGPPSQMGSPMGNRTGSETPQAPMSGVGPVSGGPGGFGRGSQGGNFEGPNKRRRY</sequence>